<dbReference type="EMBL" id="CP000462">
    <property type="protein sequence ID" value="ABK36631.1"/>
    <property type="molecule type" value="Genomic_DNA"/>
</dbReference>
<dbReference type="RefSeq" id="YP_856519.1">
    <property type="nucleotide sequence ID" value="NC_008570.1"/>
</dbReference>
<dbReference type="STRING" id="380703.AHA_1988"/>
<dbReference type="EnsemblBacteria" id="ABK36631">
    <property type="protein sequence ID" value="ABK36631"/>
    <property type="gene ID" value="AHA_1988"/>
</dbReference>
<dbReference type="KEGG" id="aha:AHA_1988"/>
<dbReference type="PATRIC" id="fig|380703.7.peg.2008"/>
<dbReference type="eggNOG" id="COG3158">
    <property type="taxonomic scope" value="Bacteria"/>
</dbReference>
<dbReference type="HOGENOM" id="CLU_008142_4_2_6"/>
<dbReference type="OrthoDB" id="9805577at2"/>
<dbReference type="Proteomes" id="UP000000756">
    <property type="component" value="Chromosome"/>
</dbReference>
<dbReference type="GO" id="GO:0005886">
    <property type="term" value="C:plasma membrane"/>
    <property type="evidence" value="ECO:0007669"/>
    <property type="project" value="UniProtKB-SubCell"/>
</dbReference>
<dbReference type="GO" id="GO:0015079">
    <property type="term" value="F:potassium ion transmembrane transporter activity"/>
    <property type="evidence" value="ECO:0007669"/>
    <property type="project" value="UniProtKB-UniRule"/>
</dbReference>
<dbReference type="GO" id="GO:0015293">
    <property type="term" value="F:symporter activity"/>
    <property type="evidence" value="ECO:0007669"/>
    <property type="project" value="UniProtKB-UniRule"/>
</dbReference>
<dbReference type="HAMAP" id="MF_01522">
    <property type="entry name" value="Kup"/>
    <property type="match status" value="1"/>
</dbReference>
<dbReference type="InterPro" id="IPR003855">
    <property type="entry name" value="K+_transporter"/>
</dbReference>
<dbReference type="InterPro" id="IPR053952">
    <property type="entry name" value="K_trans_C"/>
</dbReference>
<dbReference type="InterPro" id="IPR053951">
    <property type="entry name" value="K_trans_N"/>
</dbReference>
<dbReference type="InterPro" id="IPR023051">
    <property type="entry name" value="Kup"/>
</dbReference>
<dbReference type="PANTHER" id="PTHR30540:SF79">
    <property type="entry name" value="LOW AFFINITY POTASSIUM TRANSPORT SYSTEM PROTEIN KUP"/>
    <property type="match status" value="1"/>
</dbReference>
<dbReference type="PANTHER" id="PTHR30540">
    <property type="entry name" value="OSMOTIC STRESS POTASSIUM TRANSPORTER"/>
    <property type="match status" value="1"/>
</dbReference>
<dbReference type="Pfam" id="PF02705">
    <property type="entry name" value="K_trans"/>
    <property type="match status" value="1"/>
</dbReference>
<dbReference type="Pfam" id="PF22776">
    <property type="entry name" value="K_trans_C"/>
    <property type="match status" value="1"/>
</dbReference>
<proteinExistence type="inferred from homology"/>
<name>KUP1_AERHH</name>
<sequence>MKWNFMMSHGHQQGRMAITLAALGVVYGDLGTSPLYALKESFAGHLGLQPTPEGILSIVSLFFWTIMIVVSFKYVLLVLRADDKGEGGILTLASLASRRLPAKPRALLMLLGLVGVGLFIGDAVITPAISVLSAVEGLQVITPELAPFVLPITLTVLVILFGAQHYGTAGIGRLFGPIMLLWFGVLAALGAYEIVQNPAILQAVNPLYALDFMVSRPGIAFITLGAVVLCVTGTEALYADMGHFGRGAIQLAWGSLVMPALLLNYFGQGALLLRNPAAIENPFYLLAPSWLAFPLLILATLATVIASQAVISGTYSVVRQAILLGYLPRQEIRHTSEHEIGQIYLPLVNWLLLGGIIIVIIWFQSSSNLAAAYGIAVTGTMALTTLLLMVVAARRWKWSRWLIALICAPLLLVDVTFFAANTTKFLAGGWLPILFALLAIIVMTTWKRGRELVLDKLEHKSLALKGFVDNMQAHPPLQVPGTAVFLSKSVQVVPHAMLHNLKHNKILHERVIFLTVQIKDEPWLSFKERIELTHLGEGFWQVVAHFGYKEVPSMEEIFQACAQEDLKVTMAKTSFFLSHENLVSTDLPGMARWREGLFVWMNRNSLKATDFFHIPANRVVELGVLLEL</sequence>
<evidence type="ECO:0000255" key="1">
    <source>
        <dbReference type="HAMAP-Rule" id="MF_01522"/>
    </source>
</evidence>
<keyword id="KW-0997">Cell inner membrane</keyword>
<keyword id="KW-1003">Cell membrane</keyword>
<keyword id="KW-0406">Ion transport</keyword>
<keyword id="KW-0472">Membrane</keyword>
<keyword id="KW-0630">Potassium</keyword>
<keyword id="KW-0633">Potassium transport</keyword>
<keyword id="KW-1185">Reference proteome</keyword>
<keyword id="KW-0769">Symport</keyword>
<keyword id="KW-0812">Transmembrane</keyword>
<keyword id="KW-1133">Transmembrane helix</keyword>
<keyword id="KW-0813">Transport</keyword>
<gene>
    <name evidence="1" type="primary">kup1</name>
    <name type="ordered locus">AHA_1988</name>
</gene>
<accession>A0KJR8</accession>
<feature type="chain" id="PRO_0000279763" description="Probable potassium transport system protein Kup 1">
    <location>
        <begin position="1"/>
        <end position="628"/>
    </location>
</feature>
<feature type="transmembrane region" description="Helical" evidence="1">
    <location>
        <begin position="18"/>
        <end position="38"/>
    </location>
</feature>
<feature type="transmembrane region" description="Helical" evidence="1">
    <location>
        <begin position="58"/>
        <end position="78"/>
    </location>
</feature>
<feature type="transmembrane region" description="Helical" evidence="1">
    <location>
        <begin position="106"/>
        <end position="126"/>
    </location>
</feature>
<feature type="transmembrane region" description="Helical" evidence="1">
    <location>
        <begin position="141"/>
        <end position="161"/>
    </location>
</feature>
<feature type="transmembrane region" description="Helical" evidence="1">
    <location>
        <begin position="175"/>
        <end position="195"/>
    </location>
</feature>
<feature type="transmembrane region" description="Helical" evidence="1">
    <location>
        <begin position="219"/>
        <end position="239"/>
    </location>
</feature>
<feature type="transmembrane region" description="Helical" evidence="1">
    <location>
        <begin position="253"/>
        <end position="273"/>
    </location>
</feature>
<feature type="transmembrane region" description="Helical" evidence="1">
    <location>
        <begin position="285"/>
        <end position="305"/>
    </location>
</feature>
<feature type="transmembrane region" description="Helical" evidence="1">
    <location>
        <begin position="343"/>
        <end position="363"/>
    </location>
</feature>
<feature type="transmembrane region" description="Helical" evidence="1">
    <location>
        <begin position="371"/>
        <end position="391"/>
    </location>
</feature>
<feature type="transmembrane region" description="Helical" evidence="1">
    <location>
        <begin position="401"/>
        <end position="421"/>
    </location>
</feature>
<feature type="transmembrane region" description="Helical" evidence="1">
    <location>
        <begin position="425"/>
        <end position="445"/>
    </location>
</feature>
<organism>
    <name type="scientific">Aeromonas hydrophila subsp. hydrophila (strain ATCC 7966 / DSM 30187 / BCRC 13018 / CCUG 14551 / JCM 1027 / KCTC 2358 / NCIMB 9240 / NCTC 8049)</name>
    <dbReference type="NCBI Taxonomy" id="380703"/>
    <lineage>
        <taxon>Bacteria</taxon>
        <taxon>Pseudomonadati</taxon>
        <taxon>Pseudomonadota</taxon>
        <taxon>Gammaproteobacteria</taxon>
        <taxon>Aeromonadales</taxon>
        <taxon>Aeromonadaceae</taxon>
        <taxon>Aeromonas</taxon>
    </lineage>
</organism>
<comment type="function">
    <text evidence="1">Transport of potassium into the cell. Likely operates as a K(+):H(+) symporter.</text>
</comment>
<comment type="catalytic activity">
    <reaction evidence="1">
        <text>K(+)(in) + H(+)(in) = K(+)(out) + H(+)(out)</text>
        <dbReference type="Rhea" id="RHEA:28490"/>
        <dbReference type="ChEBI" id="CHEBI:15378"/>
        <dbReference type="ChEBI" id="CHEBI:29103"/>
    </reaction>
    <physiologicalReaction direction="right-to-left" evidence="1">
        <dbReference type="Rhea" id="RHEA:28492"/>
    </physiologicalReaction>
</comment>
<comment type="subcellular location">
    <subcellularLocation>
        <location evidence="1">Cell inner membrane</location>
        <topology evidence="1">Multi-pass membrane protein</topology>
    </subcellularLocation>
</comment>
<comment type="similarity">
    <text evidence="1">Belongs to the HAK/KUP transporter (TC 2.A.72) family.</text>
</comment>
<reference key="1">
    <citation type="journal article" date="2006" name="J. Bacteriol.">
        <title>Genome sequence of Aeromonas hydrophila ATCC 7966T: jack of all trades.</title>
        <authorList>
            <person name="Seshadri R."/>
            <person name="Joseph S.W."/>
            <person name="Chopra A.K."/>
            <person name="Sha J."/>
            <person name="Shaw J."/>
            <person name="Graf J."/>
            <person name="Haft D.H."/>
            <person name="Wu M."/>
            <person name="Ren Q."/>
            <person name="Rosovitz M.J."/>
            <person name="Madupu R."/>
            <person name="Tallon L."/>
            <person name="Kim M."/>
            <person name="Jin S."/>
            <person name="Vuong H."/>
            <person name="Stine O.C."/>
            <person name="Ali A."/>
            <person name="Horneman A.J."/>
            <person name="Heidelberg J.F."/>
        </authorList>
    </citation>
    <scope>NUCLEOTIDE SEQUENCE [LARGE SCALE GENOMIC DNA]</scope>
    <source>
        <strain>ATCC 7966 / DSM 30187 / BCRC 13018 / CCUG 14551 / JCM 1027 / KCTC 2358 / NCIMB 9240 / NCTC 8049</strain>
    </source>
</reference>
<protein>
    <recommendedName>
        <fullName evidence="1">Probable potassium transport system protein Kup 1</fullName>
    </recommendedName>
</protein>